<accession>A0A385XI11</accession>
<name>LAD_AURME</name>
<keyword id="KW-0479">Metal-binding</keyword>
<keyword id="KW-0520">NAD</keyword>
<keyword id="KW-0547">Nucleotide-binding</keyword>
<keyword id="KW-0560">Oxidoreductase</keyword>
<keyword id="KW-0862">Zinc</keyword>
<proteinExistence type="evidence at protein level"/>
<dbReference type="EC" id="1.1.1.12" evidence="1"/>
<dbReference type="EMBL" id="MG983070">
    <property type="protein sequence ID" value="AYC07633.1"/>
    <property type="molecule type" value="Genomic_DNA"/>
</dbReference>
<dbReference type="GO" id="GO:0003939">
    <property type="term" value="F:L-iditol 2-dehydrogenase (NAD+) activity"/>
    <property type="evidence" value="ECO:0007669"/>
    <property type="project" value="TreeGrafter"/>
</dbReference>
<dbReference type="GO" id="GO:0046872">
    <property type="term" value="F:metal ion binding"/>
    <property type="evidence" value="ECO:0007669"/>
    <property type="project" value="UniProtKB-KW"/>
</dbReference>
<dbReference type="GO" id="GO:0000166">
    <property type="term" value="F:nucleotide binding"/>
    <property type="evidence" value="ECO:0007669"/>
    <property type="project" value="UniProtKB-KW"/>
</dbReference>
<dbReference type="GO" id="GO:0006062">
    <property type="term" value="P:sorbitol catabolic process"/>
    <property type="evidence" value="ECO:0007669"/>
    <property type="project" value="TreeGrafter"/>
</dbReference>
<dbReference type="CDD" id="cd05285">
    <property type="entry name" value="sorbitol_DH"/>
    <property type="match status" value="1"/>
</dbReference>
<dbReference type="FunFam" id="3.40.50.720:FF:000068">
    <property type="entry name" value="Sorbitol dehydrogenase"/>
    <property type="match status" value="1"/>
</dbReference>
<dbReference type="Gene3D" id="3.90.180.10">
    <property type="entry name" value="Medium-chain alcohol dehydrogenases, catalytic domain"/>
    <property type="match status" value="1"/>
</dbReference>
<dbReference type="Gene3D" id="3.40.50.720">
    <property type="entry name" value="NAD(P)-binding Rossmann-like Domain"/>
    <property type="match status" value="1"/>
</dbReference>
<dbReference type="InterPro" id="IPR013149">
    <property type="entry name" value="ADH-like_C"/>
</dbReference>
<dbReference type="InterPro" id="IPR013154">
    <property type="entry name" value="ADH-like_N"/>
</dbReference>
<dbReference type="InterPro" id="IPR011032">
    <property type="entry name" value="GroES-like_sf"/>
</dbReference>
<dbReference type="InterPro" id="IPR036291">
    <property type="entry name" value="NAD(P)-bd_dom_sf"/>
</dbReference>
<dbReference type="InterPro" id="IPR045306">
    <property type="entry name" value="SDH-like"/>
</dbReference>
<dbReference type="PANTHER" id="PTHR43161:SF12">
    <property type="entry name" value="L-ARABINITOL 4-DEHYDROGENASE"/>
    <property type="match status" value="1"/>
</dbReference>
<dbReference type="PANTHER" id="PTHR43161">
    <property type="entry name" value="SORBITOL DEHYDROGENASE"/>
    <property type="match status" value="1"/>
</dbReference>
<dbReference type="Pfam" id="PF08240">
    <property type="entry name" value="ADH_N"/>
    <property type="match status" value="1"/>
</dbReference>
<dbReference type="Pfam" id="PF00107">
    <property type="entry name" value="ADH_zinc_N"/>
    <property type="match status" value="1"/>
</dbReference>
<dbReference type="SUPFAM" id="SSF50129">
    <property type="entry name" value="GroES-like"/>
    <property type="match status" value="1"/>
</dbReference>
<dbReference type="SUPFAM" id="SSF51735">
    <property type="entry name" value="NAD(P)-binding Rossmann-fold domains"/>
    <property type="match status" value="1"/>
</dbReference>
<sequence length="368" mass="39658">MVKPTKSNIGVYTNPAHDLWVAEAEPSLEQVQTGEKLAPGEVTVAVKSTGICGSDVHFWHAGCIGPMIVEDDHILGHESAGVVVAVHENVKSLKVGDRVAIEPNIICGECEPCLTGRYNGCDSVLFRSTPPVPGLLRRYVNHPAMWCHKIGDMSYENGSLLEPLSVALAGVQRAEVRLGDPILVCGAGPIGLVTLACVKAAGAEPIIITDIDEGRLAFAKEFCPSVRTHKVDFKHTPEDFAKAITELGGGVEPAIALECTGVESSIAGAIQTVKFGGKVFVIGVGKNEIKIPFMRLSTREVDLQFQYRYANTWPRAIRLLQGGVINLEKLVTHRFKIEDALEAFKTAADPKTGAIKVQIQSFEEGESR</sequence>
<organism>
    <name type="scientific">Aureobasidium melanogenum</name>
    <name type="common">Aureobasidium pullulans var. melanogenum</name>
    <dbReference type="NCBI Taxonomy" id="46634"/>
    <lineage>
        <taxon>Eukaryota</taxon>
        <taxon>Fungi</taxon>
        <taxon>Dikarya</taxon>
        <taxon>Ascomycota</taxon>
        <taxon>Pezizomycotina</taxon>
        <taxon>Dothideomycetes</taxon>
        <taxon>Dothideomycetidae</taxon>
        <taxon>Dothideales</taxon>
        <taxon>Saccotheciaceae</taxon>
        <taxon>Aureobasidium</taxon>
    </lineage>
</organism>
<reference key="1">
    <citation type="submission" date="2018-02" db="EMBL/GenBank/DDBJ databases">
        <authorList>
            <person name="Cohen D.B."/>
            <person name="Kent A.D."/>
        </authorList>
    </citation>
    <scope>NUCLEOTIDE SEQUENCE [GENOMIC DNA]</scope>
    <source>
        <strain>6-1-2</strain>
    </source>
</reference>
<reference key="2">
    <citation type="journal article" date="2011" name="Biotechnol. Lett.">
        <title>Heavy oils produced by Aureobasidium pullulans.</title>
        <authorList>
            <person name="Manitchotpisit P."/>
            <person name="Price N.P."/>
            <person name="Leathers T.D."/>
            <person name="Punnapayak H."/>
        </authorList>
    </citation>
    <scope>BIOTECHNOLOGY</scope>
</reference>
<reference key="3">
    <citation type="journal article" date="2019" name="Biotechnol. Rep.">
        <title>Inhibition of Streptococcus mutans and S. sobrinus biofilms by liamocins from Aureobasidium pullulans.</title>
        <authorList>
            <person name="Leathers T.D."/>
            <person name="Rich J.O."/>
            <person name="Bischoff K.M."/>
            <person name="Skory C.D."/>
            <person name="Nunnally M.S."/>
        </authorList>
    </citation>
    <scope>BIOTECHNOLOGY</scope>
</reference>
<reference key="4">
    <citation type="journal article" date="2020" name="Biochem. J.">
        <title>Genetic evidences for the core biosynthesis pathway, regulation, transport and secretion of liamocins in yeast-like fungal cells.</title>
        <authorList>
            <person name="Xue S.J."/>
            <person name="Liu G.L."/>
            <person name="Chi Z."/>
            <person name="Gao Z.C."/>
            <person name="Hu Z."/>
            <person name="Chi Z.M."/>
        </authorList>
    </citation>
    <scope>FUNCTION</scope>
    <scope>DISRUPTION PHENOTYPE</scope>
</reference>
<reference key="5">
    <citation type="journal article" date="2021" name="Enzyme Microb. Technol.">
        <title>cAMP-PKA and HOG1 signaling pathways regulate liamocin production by different ways via the transcriptional activator Msn2 in Aureobasidium melanogenum.</title>
        <authorList>
            <person name="Zhang M."/>
            <person name="Gao Z.C."/>
            <person name="Chi Z."/>
            <person name="Liu G.L."/>
            <person name="Hu Z."/>
            <person name="Chi Z.M."/>
        </authorList>
    </citation>
    <scope>INDUCTION</scope>
</reference>
<evidence type="ECO:0000250" key="1">
    <source>
        <dbReference type="UniProtKB" id="Q7SI09"/>
    </source>
</evidence>
<evidence type="ECO:0000269" key="2">
    <source>
    </source>
</evidence>
<evidence type="ECO:0000269" key="3">
    <source>
    </source>
</evidence>
<evidence type="ECO:0000269" key="4">
    <source>
    </source>
</evidence>
<evidence type="ECO:0000269" key="5">
    <source>
    </source>
</evidence>
<evidence type="ECO:0000303" key="6">
    <source>
    </source>
</evidence>
<evidence type="ECO:0000305" key="7"/>
<protein>
    <recommendedName>
        <fullName evidence="6">L-arabinitol 4-dehydrogenase</fullName>
        <shortName evidence="6">ArDH</shortName>
        <ecNumber evidence="1">1.1.1.12</ecNumber>
    </recommendedName>
</protein>
<comment type="function">
    <text evidence="4">Plays a key role in liamocins biosynthesis by providing the arabinol moity that is linked to 3,5-dihydroxydecanoic acid (provided by the HR-PKS PKS1) via ester bond formation catalyzed by the esterase EST1.</text>
</comment>
<comment type="catalytic activity">
    <reaction evidence="1">
        <text>L-arabinitol + NAD(+) = L-xylulose + NADH + H(+)</text>
        <dbReference type="Rhea" id="RHEA:16381"/>
        <dbReference type="ChEBI" id="CHEBI:15378"/>
        <dbReference type="ChEBI" id="CHEBI:17399"/>
        <dbReference type="ChEBI" id="CHEBI:18403"/>
        <dbReference type="ChEBI" id="CHEBI:57540"/>
        <dbReference type="ChEBI" id="CHEBI:57945"/>
        <dbReference type="EC" id="1.1.1.12"/>
    </reaction>
</comment>
<comment type="cofactor">
    <cofactor evidence="1">
        <name>Zn(2+)</name>
        <dbReference type="ChEBI" id="CHEBI:29105"/>
    </cofactor>
</comment>
<comment type="subunit">
    <text evidence="1">Homotetramer.</text>
</comment>
<comment type="induction">
    <text evidence="5">Expression is regulated by the cAMP-PKA and HOG1 signaling pathways via the transcriptional activator MSN2.</text>
</comment>
<comment type="disruption phenotype">
    <text evidence="4">Affects the ability to produce liamocins with an arabinol headgroup.</text>
</comment>
<comment type="biotechnology">
    <text evidence="2 3">Liamocins have high bioactivity against the pathogenic bacteria Streptococcus spp. and can be potential new specific inhibitors of oral streptococcal biofilms without affecting normal oral microflora (PubMed:30627519). Liamocins are also able to inhibit human cancer cell lines such as breast cancer cell lines T47D and SK-BR3 or the cervical cancer cell line HeLa (PubMed:21293903).</text>
</comment>
<comment type="similarity">
    <text evidence="7">Belongs to the zinc-containing alcohol dehydrogenase family.</text>
</comment>
<feature type="chain" id="PRO_0000461624" description="L-arabinitol 4-dehydrogenase">
    <location>
        <begin position="1"/>
        <end position="368"/>
    </location>
</feature>
<feature type="binding site" evidence="1">
    <location>
        <position position="52"/>
    </location>
    <ligand>
        <name>Zn(2+)</name>
        <dbReference type="ChEBI" id="CHEBI:29105"/>
        <label>1</label>
        <note>catalytic</note>
    </ligand>
</feature>
<feature type="binding site" evidence="1">
    <location>
        <position position="77"/>
    </location>
    <ligand>
        <name>Zn(2+)</name>
        <dbReference type="ChEBI" id="CHEBI:29105"/>
        <label>1</label>
        <note>catalytic</note>
    </ligand>
</feature>
<feature type="binding site" evidence="1">
    <location>
        <position position="78"/>
    </location>
    <ligand>
        <name>Zn(2+)</name>
        <dbReference type="ChEBI" id="CHEBI:29105"/>
        <label>1</label>
        <note>catalytic</note>
    </ligand>
</feature>
<feature type="binding site" evidence="1">
    <location>
        <position position="107"/>
    </location>
    <ligand>
        <name>Zn(2+)</name>
        <dbReference type="ChEBI" id="CHEBI:29105"/>
        <label>2</label>
        <note>structural</note>
    </ligand>
</feature>
<feature type="binding site" evidence="1">
    <location>
        <position position="110"/>
    </location>
    <ligand>
        <name>Zn(2+)</name>
        <dbReference type="ChEBI" id="CHEBI:29105"/>
        <label>2</label>
        <note>structural</note>
    </ligand>
</feature>
<feature type="binding site" evidence="1">
    <location>
        <position position="113"/>
    </location>
    <ligand>
        <name>Zn(2+)</name>
        <dbReference type="ChEBI" id="CHEBI:29105"/>
        <label>2</label>
        <note>structural</note>
    </ligand>
</feature>
<feature type="binding site" evidence="1">
    <location>
        <position position="121"/>
    </location>
    <ligand>
        <name>Zn(2+)</name>
        <dbReference type="ChEBI" id="CHEBI:29105"/>
        <label>2</label>
        <note>structural</note>
    </ligand>
</feature>
<feature type="binding site" evidence="1">
    <location>
        <position position="162"/>
    </location>
    <ligand>
        <name>Zn(2+)</name>
        <dbReference type="ChEBI" id="CHEBI:29105"/>
        <label>1</label>
        <note>catalytic</note>
    </ligand>
</feature>
<feature type="binding site" evidence="1">
    <location>
        <position position="210"/>
    </location>
    <ligand>
        <name>NAD(+)</name>
        <dbReference type="ChEBI" id="CHEBI:57540"/>
    </ligand>
</feature>
<feature type="binding site" evidence="1">
    <location>
        <position position="215"/>
    </location>
    <ligand>
        <name>NAD(+)</name>
        <dbReference type="ChEBI" id="CHEBI:57540"/>
    </ligand>
</feature>
<feature type="binding site" evidence="1">
    <location>
        <position position="282"/>
    </location>
    <ligand>
        <name>NAD(+)</name>
        <dbReference type="ChEBI" id="CHEBI:57540"/>
    </ligand>
</feature>